<feature type="signal peptide" evidence="1">
    <location>
        <begin position="1"/>
        <end position="22"/>
    </location>
</feature>
<feature type="peptide" id="PRO_0000016100" description="Relaxin B chain" evidence="1">
    <location>
        <begin position="23"/>
        <end position="59"/>
    </location>
</feature>
<feature type="propeptide" id="PRO_0000016101" description="Connecting peptide" evidence="1">
    <location>
        <begin position="64"/>
        <end position="149"/>
    </location>
</feature>
<feature type="peptide" id="PRO_0000016102" description="Relaxin A chain" evidence="1">
    <location>
        <begin position="154"/>
        <end position="177"/>
    </location>
</feature>
<feature type="region of interest" description="Disordered" evidence="2">
    <location>
        <begin position="80"/>
        <end position="114"/>
    </location>
</feature>
<feature type="compositionally biased region" description="Polar residues" evidence="2">
    <location>
        <begin position="102"/>
        <end position="114"/>
    </location>
</feature>
<feature type="disulfide bond" description="Interchain (between B and A chains)" evidence="1">
    <location>
        <begin position="36"/>
        <end position="164"/>
    </location>
</feature>
<feature type="disulfide bond" description="Interchain (between B and A chains)" evidence="1">
    <location>
        <begin position="48"/>
        <end position="177"/>
    </location>
</feature>
<feature type="disulfide bond" evidence="1">
    <location>
        <begin position="163"/>
        <end position="168"/>
    </location>
</feature>
<keyword id="KW-0165">Cleavage on pair of basic residues</keyword>
<keyword id="KW-1015">Disulfide bond</keyword>
<keyword id="KW-0372">Hormone</keyword>
<keyword id="KW-1185">Reference proteome</keyword>
<keyword id="KW-0964">Secreted</keyword>
<keyword id="KW-0732">Signal</keyword>
<dbReference type="EMBL" id="S79879">
    <property type="protein sequence ID" value="AAB35655.1"/>
    <property type="molecule type" value="mRNA"/>
</dbReference>
<dbReference type="RefSeq" id="NP_001297483.1">
    <property type="nucleotide sequence ID" value="NM_001310554.1"/>
</dbReference>
<dbReference type="SMR" id="Q64171"/>
<dbReference type="STRING" id="10036.ENSMAUP00000006729"/>
<dbReference type="GeneID" id="101831439"/>
<dbReference type="KEGG" id="maua:101831439"/>
<dbReference type="eggNOG" id="ENOG502TH8D">
    <property type="taxonomic scope" value="Eukaryota"/>
</dbReference>
<dbReference type="OrthoDB" id="8784777at2759"/>
<dbReference type="Proteomes" id="UP000189706">
    <property type="component" value="Unplaced"/>
</dbReference>
<dbReference type="GO" id="GO:0005576">
    <property type="term" value="C:extracellular region"/>
    <property type="evidence" value="ECO:0007669"/>
    <property type="project" value="UniProtKB-SubCell"/>
</dbReference>
<dbReference type="GO" id="GO:0005179">
    <property type="term" value="F:hormone activity"/>
    <property type="evidence" value="ECO:0007669"/>
    <property type="project" value="UniProtKB-KW"/>
</dbReference>
<dbReference type="CDD" id="cd04365">
    <property type="entry name" value="IlGF_relaxin_like"/>
    <property type="match status" value="1"/>
</dbReference>
<dbReference type="InterPro" id="IPR016179">
    <property type="entry name" value="Insulin-like"/>
</dbReference>
<dbReference type="InterPro" id="IPR036438">
    <property type="entry name" value="Insulin-like_sf"/>
</dbReference>
<dbReference type="InterPro" id="IPR022353">
    <property type="entry name" value="Insulin_CS"/>
</dbReference>
<dbReference type="InterPro" id="IPR022421">
    <property type="entry name" value="Relaxin"/>
</dbReference>
<dbReference type="InterPro" id="IPR051042">
    <property type="entry name" value="Repro_Hormone_Insulin-like"/>
</dbReference>
<dbReference type="PANTHER" id="PTHR12004:SF13">
    <property type="entry name" value="PRORELAXIN H2"/>
    <property type="match status" value="1"/>
</dbReference>
<dbReference type="PANTHER" id="PTHR12004">
    <property type="entry name" value="RELAXIN"/>
    <property type="match status" value="1"/>
</dbReference>
<dbReference type="Pfam" id="PF00049">
    <property type="entry name" value="Insulin"/>
    <property type="match status" value="1"/>
</dbReference>
<dbReference type="PRINTS" id="PR02004">
    <property type="entry name" value="RELAXIN"/>
</dbReference>
<dbReference type="SMART" id="SM00078">
    <property type="entry name" value="IlGF"/>
    <property type="match status" value="1"/>
</dbReference>
<dbReference type="SUPFAM" id="SSF56994">
    <property type="entry name" value="Insulin-like"/>
    <property type="match status" value="1"/>
</dbReference>
<dbReference type="PROSITE" id="PS00262">
    <property type="entry name" value="INSULIN"/>
    <property type="match status" value="1"/>
</dbReference>
<organism>
    <name type="scientific">Mesocricetus auratus</name>
    <name type="common">Golden hamster</name>
    <dbReference type="NCBI Taxonomy" id="10036"/>
    <lineage>
        <taxon>Eukaryota</taxon>
        <taxon>Metazoa</taxon>
        <taxon>Chordata</taxon>
        <taxon>Craniata</taxon>
        <taxon>Vertebrata</taxon>
        <taxon>Euteleostomi</taxon>
        <taxon>Mammalia</taxon>
        <taxon>Eutheria</taxon>
        <taxon>Euarchontoglires</taxon>
        <taxon>Glires</taxon>
        <taxon>Rodentia</taxon>
        <taxon>Myomorpha</taxon>
        <taxon>Muroidea</taxon>
        <taxon>Cricetidae</taxon>
        <taxon>Cricetinae</taxon>
        <taxon>Mesocricetus</taxon>
    </lineage>
</organism>
<reference key="1">
    <citation type="journal article" date="1995" name="Biol. Reprod.">
        <title>Determination of the prorelaxin nucleotide sequence and expression of prorelaxin messenger ribonucleic acid in the golden hamster.</title>
        <authorList>
            <person name="McCaslin R.B."/>
            <person name="Renegar R.H."/>
        </authorList>
    </citation>
    <scope>NUCLEOTIDE SEQUENCE [MRNA]</scope>
    <source>
        <tissue>Placenta</tissue>
    </source>
</reference>
<accession>Q64171</accession>
<protein>
    <recommendedName>
        <fullName>Prorelaxin</fullName>
    </recommendedName>
    <component>
        <recommendedName>
            <fullName>Relaxin B chain</fullName>
        </recommendedName>
    </component>
    <component>
        <recommendedName>
            <fullName>Relaxin A chain</fullName>
        </recommendedName>
    </component>
</protein>
<name>RELX_MESAU</name>
<sequence>MSCKFVLQLLGFWLLLSQPCRARVTKEWLDEVIHVCGREYVRAILDICAATVGLEAPPLRRRRMTEEAVSSFIKEDAEPFDTMPNLSEKPKTALPEGHPSLPEQQQYVPVSSDSVGSLDDFKKSFHATQGEAEDSSLPELKSLYLDTLSRKKRYTSIYMSHQCCFRGCSRRSLTAAC</sequence>
<evidence type="ECO:0000250" key="1"/>
<evidence type="ECO:0000256" key="2">
    <source>
        <dbReference type="SAM" id="MobiDB-lite"/>
    </source>
</evidence>
<evidence type="ECO:0000305" key="3"/>
<gene>
    <name type="primary">RLN</name>
</gene>
<comment type="function">
    <text>Relaxin is an ovarian hormone that acts with estrogen to produce dilatation of the birth canal in many mammals. It bears mature young, and allows separation of the pelvic bones.</text>
</comment>
<comment type="subunit">
    <text>Heterodimer of a B chain and an A chain linked by two disulfide bonds.</text>
</comment>
<comment type="subcellular location">
    <subcellularLocation>
        <location>Secreted</location>
    </subcellularLocation>
</comment>
<comment type="similarity">
    <text evidence="3">Belongs to the insulin family.</text>
</comment>
<proteinExistence type="evidence at transcript level"/>